<evidence type="ECO:0000250" key="1"/>
<evidence type="ECO:0000255" key="2">
    <source>
        <dbReference type="PROSITE-ProRule" id="PRU00318"/>
    </source>
</evidence>
<evidence type="ECO:0000269" key="3">
    <source>
    </source>
</evidence>
<evidence type="ECO:0000305" key="4"/>
<proteinExistence type="evidence at transcript level"/>
<feature type="chain" id="PRO_0000401391" description="Pumilio homolog 9">
    <location>
        <begin position="1"/>
        <end position="564"/>
    </location>
</feature>
<feature type="domain" description="PUM-HD" evidence="2">
    <location>
        <begin position="222"/>
        <end position="564"/>
    </location>
</feature>
<feature type="repeat" description="Pumilio 1">
    <location>
        <begin position="249"/>
        <end position="284"/>
    </location>
</feature>
<feature type="repeat" description="Pumilio 2">
    <location>
        <begin position="285"/>
        <end position="320"/>
    </location>
</feature>
<feature type="repeat" description="Pumilio 3">
    <location>
        <begin position="321"/>
        <end position="359"/>
    </location>
</feature>
<feature type="repeat" description="Pumilio 4">
    <location>
        <begin position="361"/>
        <end position="396"/>
    </location>
</feature>
<feature type="repeat" description="Pumilio 5">
    <location>
        <begin position="397"/>
        <end position="432"/>
    </location>
</feature>
<feature type="repeat" description="Pumilio 6">
    <location>
        <begin position="433"/>
        <end position="469"/>
    </location>
</feature>
<feature type="repeat" description="Pumilio 7">
    <location>
        <begin position="470"/>
        <end position="501"/>
    </location>
</feature>
<feature type="repeat" description="Pumilio 8">
    <location>
        <begin position="502"/>
        <end position="539"/>
    </location>
</feature>
<organism>
    <name type="scientific">Arabidopsis thaliana</name>
    <name type="common">Mouse-ear cress</name>
    <dbReference type="NCBI Taxonomy" id="3702"/>
    <lineage>
        <taxon>Eukaryota</taxon>
        <taxon>Viridiplantae</taxon>
        <taxon>Streptophyta</taxon>
        <taxon>Embryophyta</taxon>
        <taxon>Tracheophyta</taxon>
        <taxon>Spermatophyta</taxon>
        <taxon>Magnoliopsida</taxon>
        <taxon>eudicotyledons</taxon>
        <taxon>Gunneridae</taxon>
        <taxon>Pentapetalae</taxon>
        <taxon>rosids</taxon>
        <taxon>malvids</taxon>
        <taxon>Brassicales</taxon>
        <taxon>Brassicaceae</taxon>
        <taxon>Camelineae</taxon>
        <taxon>Arabidopsis</taxon>
    </lineage>
</organism>
<accession>Q1PFN9</accession>
<accession>Q9LP23</accession>
<sequence>MGFGGFNGDFNFRGASDHRPLGSDGFLPSLDTNPFLKNHKSVEALDLCKKLHKMGISCDMSIWTKPEEQFRVDPSEFGARTLHGSSGFDQNLTGASQIHDGFRNFSSVRLQNNNFHGVSPSPGEMRLLGRQDSFNLNGFEEMLALKNHRDFLLDQIHEPIKRPPFLRGNDALISSLMFEGNNRVSQTLAAMEASRGFYPEEDSSLLSPFHEKVSGKLGASYLEDTVLIGQGSYGKMSPKSNNDLVSMVEIYGSVNLMAKDQIGCRVLQKLVEEGTFHEAKVILLAIIDHVVELSMDPFGNYIVQKLFDVSDEEQRTLIVSVLTSNPRELIRICLNTYGTRVVQKMIETVKTKQQIALVKSGLKPGFLALVKDLNGNHVIQSCLQTLGPNDNEFVLEAATKYCAEIAIHRHGCCVLQCCISNSVGLQRERLVAEISRNSLHLSQDPFGNYVVQYLIDQQVSAVKLLVQFRMHYAELATQKFSSHVIEKCLRKYPESRAEIVRELLCVPNFEYLLQDPYANYVIQTALSVTKGPVRAKLVAKVYRYGKLHSSPYCKKIFSKTILKK</sequence>
<gene>
    <name type="primary">APUM9</name>
    <name type="ordered locus">At1g35730</name>
    <name type="ORF">F14D7.3</name>
</gene>
<comment type="function">
    <text evidence="1">Sequence-specific RNA-binding protein that regulates translation and mRNA stability by binding the 3'-UTR of target mRNAs.</text>
</comment>
<comment type="subcellular location">
    <subcellularLocation>
        <location evidence="3">Cytoplasm</location>
    </subcellularLocation>
</comment>
<comment type="domain">
    <text evidence="1">The pumilio repeats mediate the association with RNA by packing together to form a right-handed superhelix that approximates a half donut. The number as well as the specific sequence of the repeats determine the specificity for target mRNAs (By similarity).</text>
</comment>
<comment type="sequence caution" evidence="4">
    <conflict type="erroneous initiation">
        <sequence resource="EMBL-CDS" id="AAF79883"/>
    </conflict>
    <text>Extended N-terminus.</text>
</comment>
<name>PUM9_ARATH</name>
<reference key="1">
    <citation type="journal article" date="2000" name="Nature">
        <title>Sequence and analysis of chromosome 1 of the plant Arabidopsis thaliana.</title>
        <authorList>
            <person name="Theologis A."/>
            <person name="Ecker J.R."/>
            <person name="Palm C.J."/>
            <person name="Federspiel N.A."/>
            <person name="Kaul S."/>
            <person name="White O."/>
            <person name="Alonso J."/>
            <person name="Altafi H."/>
            <person name="Araujo R."/>
            <person name="Bowman C.L."/>
            <person name="Brooks S.Y."/>
            <person name="Buehler E."/>
            <person name="Chan A."/>
            <person name="Chao Q."/>
            <person name="Chen H."/>
            <person name="Cheuk R.F."/>
            <person name="Chin C.W."/>
            <person name="Chung M.K."/>
            <person name="Conn L."/>
            <person name="Conway A.B."/>
            <person name="Conway A.R."/>
            <person name="Creasy T.H."/>
            <person name="Dewar K."/>
            <person name="Dunn P."/>
            <person name="Etgu P."/>
            <person name="Feldblyum T.V."/>
            <person name="Feng J.-D."/>
            <person name="Fong B."/>
            <person name="Fujii C.Y."/>
            <person name="Gill J.E."/>
            <person name="Goldsmith A.D."/>
            <person name="Haas B."/>
            <person name="Hansen N.F."/>
            <person name="Hughes B."/>
            <person name="Huizar L."/>
            <person name="Hunter J.L."/>
            <person name="Jenkins J."/>
            <person name="Johnson-Hopson C."/>
            <person name="Khan S."/>
            <person name="Khaykin E."/>
            <person name="Kim C.J."/>
            <person name="Koo H.L."/>
            <person name="Kremenetskaia I."/>
            <person name="Kurtz D.B."/>
            <person name="Kwan A."/>
            <person name="Lam B."/>
            <person name="Langin-Hooper S."/>
            <person name="Lee A."/>
            <person name="Lee J.M."/>
            <person name="Lenz C.A."/>
            <person name="Li J.H."/>
            <person name="Li Y.-P."/>
            <person name="Lin X."/>
            <person name="Liu S.X."/>
            <person name="Liu Z.A."/>
            <person name="Luros J.S."/>
            <person name="Maiti R."/>
            <person name="Marziali A."/>
            <person name="Militscher J."/>
            <person name="Miranda M."/>
            <person name="Nguyen M."/>
            <person name="Nierman W.C."/>
            <person name="Osborne B.I."/>
            <person name="Pai G."/>
            <person name="Peterson J."/>
            <person name="Pham P.K."/>
            <person name="Rizzo M."/>
            <person name="Rooney T."/>
            <person name="Rowley D."/>
            <person name="Sakano H."/>
            <person name="Salzberg S.L."/>
            <person name="Schwartz J.R."/>
            <person name="Shinn P."/>
            <person name="Southwick A.M."/>
            <person name="Sun H."/>
            <person name="Tallon L.J."/>
            <person name="Tambunga G."/>
            <person name="Toriumi M.J."/>
            <person name="Town C.D."/>
            <person name="Utterback T."/>
            <person name="Van Aken S."/>
            <person name="Vaysberg M."/>
            <person name="Vysotskaia V.S."/>
            <person name="Walker M."/>
            <person name="Wu D."/>
            <person name="Yu G."/>
            <person name="Fraser C.M."/>
            <person name="Venter J.C."/>
            <person name="Davis R.W."/>
        </authorList>
    </citation>
    <scope>NUCLEOTIDE SEQUENCE [LARGE SCALE GENOMIC DNA]</scope>
    <source>
        <strain>cv. Columbia</strain>
    </source>
</reference>
<reference key="2">
    <citation type="journal article" date="2017" name="Plant J.">
        <title>Araport11: a complete reannotation of the Arabidopsis thaliana reference genome.</title>
        <authorList>
            <person name="Cheng C.Y."/>
            <person name="Krishnakumar V."/>
            <person name="Chan A.P."/>
            <person name="Thibaud-Nissen F."/>
            <person name="Schobel S."/>
            <person name="Town C.D."/>
        </authorList>
    </citation>
    <scope>GENOME REANNOTATION</scope>
    <source>
        <strain>cv. Columbia</strain>
    </source>
</reference>
<reference key="3">
    <citation type="journal article" date="2006" name="Plant Biotechnol. J.">
        <title>Simultaneous high-throughput recombinational cloning of open reading frames in closed and open configurations.</title>
        <authorList>
            <person name="Underwood B.A."/>
            <person name="Vanderhaeghen R."/>
            <person name="Whitford R."/>
            <person name="Town C.D."/>
            <person name="Hilson P."/>
        </authorList>
    </citation>
    <scope>NUCLEOTIDE SEQUENCE [LARGE SCALE MRNA]</scope>
    <source>
        <strain>cv. Columbia</strain>
    </source>
</reference>
<reference key="4">
    <citation type="journal article" date="2009" name="FEBS J.">
        <title>Molecular characterization of Arabidopsis thaliana PUF proteins -- binding specificity and target candidates.</title>
        <authorList>
            <person name="Francischini C.W."/>
            <person name="Quaggio R.B."/>
        </authorList>
    </citation>
    <scope>GENE FAMILY</scope>
</reference>
<reference key="5">
    <citation type="journal article" date="2010" name="BMC Plant Biol.">
        <title>The Puf family of RNA-binding proteins in plants: phylogeny, structural modeling, activity and subcellular localization.</title>
        <authorList>
            <person name="Tam P.P."/>
            <person name="Barrette-Ng I.H."/>
            <person name="Simon D.M."/>
            <person name="Tam M.W."/>
            <person name="Ang A.L."/>
            <person name="Muench D.G."/>
        </authorList>
    </citation>
    <scope>GENE FAMILY</scope>
    <scope>SUBCELLULAR LOCATION</scope>
</reference>
<dbReference type="EMBL" id="AC021198">
    <property type="protein sequence ID" value="AAF79883.1"/>
    <property type="status" value="ALT_INIT"/>
    <property type="molecule type" value="Genomic_DNA"/>
</dbReference>
<dbReference type="EMBL" id="CP002684">
    <property type="protein sequence ID" value="AEE31826.1"/>
    <property type="molecule type" value="Genomic_DNA"/>
</dbReference>
<dbReference type="EMBL" id="DQ446324">
    <property type="protein sequence ID" value="ABE65687.1"/>
    <property type="molecule type" value="mRNA"/>
</dbReference>
<dbReference type="PIR" id="D86479">
    <property type="entry name" value="D86479"/>
</dbReference>
<dbReference type="RefSeq" id="NP_174811.1">
    <property type="nucleotide sequence ID" value="NM_103275.1"/>
</dbReference>
<dbReference type="SMR" id="Q1PFN9"/>
<dbReference type="STRING" id="3702.Q1PFN9"/>
<dbReference type="iPTMnet" id="Q1PFN9"/>
<dbReference type="PaxDb" id="3702-AT1G35730.1"/>
<dbReference type="EnsemblPlants" id="AT1G35730.1">
    <property type="protein sequence ID" value="AT1G35730.1"/>
    <property type="gene ID" value="AT1G35730"/>
</dbReference>
<dbReference type="GeneID" id="840477"/>
<dbReference type="Gramene" id="AT1G35730.1">
    <property type="protein sequence ID" value="AT1G35730.1"/>
    <property type="gene ID" value="AT1G35730"/>
</dbReference>
<dbReference type="KEGG" id="ath:AT1G35730"/>
<dbReference type="Araport" id="AT1G35730"/>
<dbReference type="TAIR" id="AT1G35730">
    <property type="gene designation" value="PUM9"/>
</dbReference>
<dbReference type="eggNOG" id="KOG2049">
    <property type="taxonomic scope" value="Eukaryota"/>
</dbReference>
<dbReference type="HOGENOM" id="CLU_004017_5_2_1"/>
<dbReference type="InParanoid" id="Q1PFN9"/>
<dbReference type="OMA" id="FLEIINH"/>
<dbReference type="PhylomeDB" id="Q1PFN9"/>
<dbReference type="PRO" id="PR:Q1PFN9"/>
<dbReference type="Proteomes" id="UP000006548">
    <property type="component" value="Chromosome 1"/>
</dbReference>
<dbReference type="ExpressionAtlas" id="Q1PFN9">
    <property type="expression patterns" value="baseline and differential"/>
</dbReference>
<dbReference type="GO" id="GO:0005737">
    <property type="term" value="C:cytoplasm"/>
    <property type="evidence" value="ECO:0000314"/>
    <property type="project" value="TAIR"/>
</dbReference>
<dbReference type="GO" id="GO:0003723">
    <property type="term" value="F:RNA binding"/>
    <property type="evidence" value="ECO:0007669"/>
    <property type="project" value="UniProtKB-KW"/>
</dbReference>
<dbReference type="GO" id="GO:1902039">
    <property type="term" value="P:negative regulation of seed dormancy process"/>
    <property type="evidence" value="ECO:0000315"/>
    <property type="project" value="TAIR"/>
</dbReference>
<dbReference type="GO" id="GO:0006417">
    <property type="term" value="P:regulation of translation"/>
    <property type="evidence" value="ECO:0007669"/>
    <property type="project" value="UniProtKB-KW"/>
</dbReference>
<dbReference type="CDD" id="cd07920">
    <property type="entry name" value="Pumilio"/>
    <property type="match status" value="1"/>
</dbReference>
<dbReference type="FunFam" id="1.25.10.10:FF:000237">
    <property type="entry name" value="Pumilio homolog 9"/>
    <property type="match status" value="1"/>
</dbReference>
<dbReference type="Gene3D" id="1.25.10.10">
    <property type="entry name" value="Leucine-rich Repeat Variant"/>
    <property type="match status" value="1"/>
</dbReference>
<dbReference type="InterPro" id="IPR011989">
    <property type="entry name" value="ARM-like"/>
</dbReference>
<dbReference type="InterPro" id="IPR016024">
    <property type="entry name" value="ARM-type_fold"/>
</dbReference>
<dbReference type="InterPro" id="IPR033133">
    <property type="entry name" value="PUM-HD"/>
</dbReference>
<dbReference type="InterPro" id="IPR033712">
    <property type="entry name" value="Pumilio_RNA-bd"/>
</dbReference>
<dbReference type="InterPro" id="IPR001313">
    <property type="entry name" value="Pumilio_RNA-bd_rpt"/>
</dbReference>
<dbReference type="PANTHER" id="PTHR12537:SF136">
    <property type="entry name" value="PUMILIO HOMOLOG 9-RELATED"/>
    <property type="match status" value="1"/>
</dbReference>
<dbReference type="PANTHER" id="PTHR12537">
    <property type="entry name" value="RNA BINDING PROTEIN PUMILIO-RELATED"/>
    <property type="match status" value="1"/>
</dbReference>
<dbReference type="Pfam" id="PF00806">
    <property type="entry name" value="PUF"/>
    <property type="match status" value="8"/>
</dbReference>
<dbReference type="SMART" id="SM00025">
    <property type="entry name" value="Pumilio"/>
    <property type="match status" value="8"/>
</dbReference>
<dbReference type="SUPFAM" id="SSF48371">
    <property type="entry name" value="ARM repeat"/>
    <property type="match status" value="1"/>
</dbReference>
<dbReference type="PROSITE" id="PS50302">
    <property type="entry name" value="PUM"/>
    <property type="match status" value="7"/>
</dbReference>
<dbReference type="PROSITE" id="PS50303">
    <property type="entry name" value="PUM_HD"/>
    <property type="match status" value="1"/>
</dbReference>
<protein>
    <recommendedName>
        <fullName>Pumilio homolog 9</fullName>
        <shortName>APUM-9</shortName>
        <shortName>AtPUM9</shortName>
    </recommendedName>
</protein>
<keyword id="KW-0963">Cytoplasm</keyword>
<keyword id="KW-1185">Reference proteome</keyword>
<keyword id="KW-0677">Repeat</keyword>
<keyword id="KW-0694">RNA-binding</keyword>
<keyword id="KW-0810">Translation regulation</keyword>